<keyword id="KW-0028">Amino-acid biosynthesis</keyword>
<keyword id="KW-0963">Cytoplasm</keyword>
<keyword id="KW-0413">Isomerase</keyword>
<keyword id="KW-0457">Lysine biosynthesis</keyword>
<keyword id="KW-1185">Reference proteome</keyword>
<dbReference type="EC" id="5.1.1.7" evidence="1"/>
<dbReference type="EMBL" id="CP000304">
    <property type="protein sequence ID" value="ABP78216.1"/>
    <property type="molecule type" value="Genomic_DNA"/>
</dbReference>
<dbReference type="RefSeq" id="WP_011911743.1">
    <property type="nucleotide sequence ID" value="NC_009434.1"/>
</dbReference>
<dbReference type="SMR" id="A4VGW5"/>
<dbReference type="KEGG" id="psa:PST_0510"/>
<dbReference type="eggNOG" id="COG0253">
    <property type="taxonomic scope" value="Bacteria"/>
</dbReference>
<dbReference type="HOGENOM" id="CLU_053306_1_1_6"/>
<dbReference type="UniPathway" id="UPA00034">
    <property type="reaction ID" value="UER00025"/>
</dbReference>
<dbReference type="Proteomes" id="UP000000233">
    <property type="component" value="Chromosome"/>
</dbReference>
<dbReference type="GO" id="GO:0005829">
    <property type="term" value="C:cytosol"/>
    <property type="evidence" value="ECO:0007669"/>
    <property type="project" value="TreeGrafter"/>
</dbReference>
<dbReference type="GO" id="GO:0008837">
    <property type="term" value="F:diaminopimelate epimerase activity"/>
    <property type="evidence" value="ECO:0007669"/>
    <property type="project" value="UniProtKB-UniRule"/>
</dbReference>
<dbReference type="GO" id="GO:0009089">
    <property type="term" value="P:lysine biosynthetic process via diaminopimelate"/>
    <property type="evidence" value="ECO:0007669"/>
    <property type="project" value="UniProtKB-UniRule"/>
</dbReference>
<dbReference type="FunFam" id="3.10.310.10:FF:000001">
    <property type="entry name" value="Diaminopimelate epimerase"/>
    <property type="match status" value="1"/>
</dbReference>
<dbReference type="FunFam" id="3.10.310.10:FF:000004">
    <property type="entry name" value="Diaminopimelate epimerase"/>
    <property type="match status" value="1"/>
</dbReference>
<dbReference type="Gene3D" id="3.10.310.10">
    <property type="entry name" value="Diaminopimelate Epimerase, Chain A, domain 1"/>
    <property type="match status" value="2"/>
</dbReference>
<dbReference type="HAMAP" id="MF_00197">
    <property type="entry name" value="DAP_epimerase"/>
    <property type="match status" value="1"/>
</dbReference>
<dbReference type="InterPro" id="IPR018510">
    <property type="entry name" value="DAP_epimerase_AS"/>
</dbReference>
<dbReference type="InterPro" id="IPR001653">
    <property type="entry name" value="DAP_epimerase_DapF"/>
</dbReference>
<dbReference type="NCBIfam" id="TIGR00652">
    <property type="entry name" value="DapF"/>
    <property type="match status" value="1"/>
</dbReference>
<dbReference type="PANTHER" id="PTHR31689:SF0">
    <property type="entry name" value="DIAMINOPIMELATE EPIMERASE"/>
    <property type="match status" value="1"/>
</dbReference>
<dbReference type="PANTHER" id="PTHR31689">
    <property type="entry name" value="DIAMINOPIMELATE EPIMERASE, CHLOROPLASTIC"/>
    <property type="match status" value="1"/>
</dbReference>
<dbReference type="Pfam" id="PF01678">
    <property type="entry name" value="DAP_epimerase"/>
    <property type="match status" value="2"/>
</dbReference>
<dbReference type="SUPFAM" id="SSF54506">
    <property type="entry name" value="Diaminopimelate epimerase-like"/>
    <property type="match status" value="1"/>
</dbReference>
<dbReference type="PROSITE" id="PS01326">
    <property type="entry name" value="DAP_EPIMERASE"/>
    <property type="match status" value="1"/>
</dbReference>
<gene>
    <name evidence="1" type="primary">dapF</name>
    <name type="ordered locus">PST_0510</name>
</gene>
<sequence>MLLRFTKMHGLGNDFMVIDLVSQHAHIQPKHAKQWGDRHTGVGFDQLLIVEPPQNPDVDFRYRIFNSDGSEVEQCGNGARCFARFVVDKRLTVKRKIKVETKGGIIELDIRPDGQIRVDMGPPRLVPAEIPFQAEREALSYSLEVDGQQVELAAASMGNPHAVLRVDSVERAPVHELGPKIEHHPRFPQRVNVGFLQVVDRRHARLRVWERGAGETQACGTGACAAAVAAIRQGWMDSPVQIELPGGRLSIEWAGPGQPVMMTGPAVRVFEGQVRL</sequence>
<evidence type="ECO:0000255" key="1">
    <source>
        <dbReference type="HAMAP-Rule" id="MF_00197"/>
    </source>
</evidence>
<accession>A4VGW5</accession>
<organism>
    <name type="scientific">Stutzerimonas stutzeri (strain A1501)</name>
    <name type="common">Pseudomonas stutzeri</name>
    <dbReference type="NCBI Taxonomy" id="379731"/>
    <lineage>
        <taxon>Bacteria</taxon>
        <taxon>Pseudomonadati</taxon>
        <taxon>Pseudomonadota</taxon>
        <taxon>Gammaproteobacteria</taxon>
        <taxon>Pseudomonadales</taxon>
        <taxon>Pseudomonadaceae</taxon>
        <taxon>Stutzerimonas</taxon>
    </lineage>
</organism>
<name>DAPF_STUS1</name>
<comment type="function">
    <text evidence="1">Catalyzes the stereoinversion of LL-2,6-diaminopimelate (L,L-DAP) to meso-diaminopimelate (meso-DAP), a precursor of L-lysine and an essential component of the bacterial peptidoglycan.</text>
</comment>
<comment type="catalytic activity">
    <reaction evidence="1">
        <text>(2S,6S)-2,6-diaminopimelate = meso-2,6-diaminopimelate</text>
        <dbReference type="Rhea" id="RHEA:15393"/>
        <dbReference type="ChEBI" id="CHEBI:57609"/>
        <dbReference type="ChEBI" id="CHEBI:57791"/>
        <dbReference type="EC" id="5.1.1.7"/>
    </reaction>
</comment>
<comment type="pathway">
    <text evidence="1">Amino-acid biosynthesis; L-lysine biosynthesis via DAP pathway; DL-2,6-diaminopimelate from LL-2,6-diaminopimelate: step 1/1.</text>
</comment>
<comment type="subunit">
    <text evidence="1">Homodimer.</text>
</comment>
<comment type="subcellular location">
    <subcellularLocation>
        <location evidence="1">Cytoplasm</location>
    </subcellularLocation>
</comment>
<comment type="similarity">
    <text evidence="1">Belongs to the diaminopimelate epimerase family.</text>
</comment>
<protein>
    <recommendedName>
        <fullName evidence="1">Diaminopimelate epimerase</fullName>
        <shortName evidence="1">DAP epimerase</shortName>
        <ecNumber evidence="1">5.1.1.7</ecNumber>
    </recommendedName>
    <alternativeName>
        <fullName evidence="1">PLP-independent amino acid racemase</fullName>
    </alternativeName>
</protein>
<feature type="chain" id="PRO_1000011937" description="Diaminopimelate epimerase">
    <location>
        <begin position="1"/>
        <end position="276"/>
    </location>
</feature>
<feature type="active site" description="Proton donor" evidence="1">
    <location>
        <position position="75"/>
    </location>
</feature>
<feature type="active site" description="Proton acceptor" evidence="1">
    <location>
        <position position="219"/>
    </location>
</feature>
<feature type="binding site" evidence="1">
    <location>
        <position position="13"/>
    </location>
    <ligand>
        <name>substrate</name>
    </ligand>
</feature>
<feature type="binding site" evidence="1">
    <location>
        <position position="46"/>
    </location>
    <ligand>
        <name>substrate</name>
    </ligand>
</feature>
<feature type="binding site" evidence="1">
    <location>
        <position position="66"/>
    </location>
    <ligand>
        <name>substrate</name>
    </ligand>
</feature>
<feature type="binding site" evidence="1">
    <location>
        <begin position="76"/>
        <end position="77"/>
    </location>
    <ligand>
        <name>substrate</name>
    </ligand>
</feature>
<feature type="binding site" evidence="1">
    <location>
        <position position="159"/>
    </location>
    <ligand>
        <name>substrate</name>
    </ligand>
</feature>
<feature type="binding site" evidence="1">
    <location>
        <position position="192"/>
    </location>
    <ligand>
        <name>substrate</name>
    </ligand>
</feature>
<feature type="binding site" evidence="1">
    <location>
        <begin position="210"/>
        <end position="211"/>
    </location>
    <ligand>
        <name>substrate</name>
    </ligand>
</feature>
<feature type="binding site" evidence="1">
    <location>
        <begin position="220"/>
        <end position="221"/>
    </location>
    <ligand>
        <name>substrate</name>
    </ligand>
</feature>
<feature type="site" description="Could be important to modulate the pK values of the two catalytic cysteine residues" evidence="1">
    <location>
        <position position="161"/>
    </location>
</feature>
<feature type="site" description="Could be important to modulate the pK values of the two catalytic cysteine residues" evidence="1">
    <location>
        <position position="210"/>
    </location>
</feature>
<feature type="site" description="Important for dimerization" evidence="1">
    <location>
        <position position="270"/>
    </location>
</feature>
<proteinExistence type="inferred from homology"/>
<reference key="1">
    <citation type="journal article" date="2008" name="Proc. Natl. Acad. Sci. U.S.A.">
        <title>Nitrogen fixation island and rhizosphere competence traits in the genome of root-associated Pseudomonas stutzeri A1501.</title>
        <authorList>
            <person name="Yan Y."/>
            <person name="Yang J."/>
            <person name="Dou Y."/>
            <person name="Chen M."/>
            <person name="Ping S."/>
            <person name="Peng J."/>
            <person name="Lu W."/>
            <person name="Zhang W."/>
            <person name="Yao Z."/>
            <person name="Li H."/>
            <person name="Liu W."/>
            <person name="He S."/>
            <person name="Geng L."/>
            <person name="Zhang X."/>
            <person name="Yang F."/>
            <person name="Yu H."/>
            <person name="Zhan Y."/>
            <person name="Li D."/>
            <person name="Lin Z."/>
            <person name="Wang Y."/>
            <person name="Elmerich C."/>
            <person name="Lin M."/>
            <person name="Jin Q."/>
        </authorList>
    </citation>
    <scope>NUCLEOTIDE SEQUENCE [LARGE SCALE GENOMIC DNA]</scope>
    <source>
        <strain>A1501</strain>
    </source>
</reference>